<comment type="disruption phenotype">
    <text evidence="1">No BsuMI restriction or methylation-related phenotype.</text>
</comment>
<proteinExistence type="predicted"/>
<dbReference type="EMBL" id="AB007637">
    <property type="protein sequence ID" value="BAA22757.1"/>
    <property type="molecule type" value="Genomic_DNA"/>
</dbReference>
<dbReference type="EMBL" id="AL009126">
    <property type="protein sequence ID" value="CAB12432.1"/>
    <property type="molecule type" value="Genomic_DNA"/>
</dbReference>
<dbReference type="PIR" id="G69788">
    <property type="entry name" value="G69788"/>
</dbReference>
<dbReference type="RefSeq" id="NP_388494.1">
    <property type="nucleotide sequence ID" value="NC_000964.3"/>
</dbReference>
<dbReference type="RefSeq" id="WP_010886429.1">
    <property type="nucleotide sequence ID" value="NC_000964.3"/>
</dbReference>
<dbReference type="SMR" id="O34715"/>
<dbReference type="FunCoup" id="O34715">
    <property type="interactions" value="342"/>
</dbReference>
<dbReference type="STRING" id="224308.BSU06130"/>
<dbReference type="PaxDb" id="224308-BSU06130"/>
<dbReference type="EnsemblBacteria" id="CAB12432">
    <property type="protein sequence ID" value="CAB12432"/>
    <property type="gene ID" value="BSU_06130"/>
</dbReference>
<dbReference type="GeneID" id="936012"/>
<dbReference type="KEGG" id="bsu:BSU06130"/>
<dbReference type="eggNOG" id="COG1073">
    <property type="taxonomic scope" value="Bacteria"/>
</dbReference>
<dbReference type="InParanoid" id="O34715"/>
<dbReference type="OrthoDB" id="1679217at2"/>
<dbReference type="BioCyc" id="BSUB:BSU06130-MONOMER"/>
<dbReference type="Proteomes" id="UP000001570">
    <property type="component" value="Chromosome"/>
</dbReference>
<dbReference type="Gene3D" id="3.40.50.1820">
    <property type="entry name" value="alpha/beta hydrolase"/>
    <property type="match status" value="1"/>
</dbReference>
<dbReference type="InterPro" id="IPR029058">
    <property type="entry name" value="AB_hydrolase_fold"/>
</dbReference>
<dbReference type="SUPFAM" id="SSF53474">
    <property type="entry name" value="alpha/beta-Hydrolases"/>
    <property type="match status" value="1"/>
</dbReference>
<sequence>MVSIFYANRLSYSIWNTIPGKYIREELEQNGVTYNELIKYWDITDPSQALPKVNKDNVLLISAKHDQYIDLKDADYLWESWGRPTRYVYNCGHSGIVLCRKKLANDTLSFIREKLV</sequence>
<feature type="chain" id="PRO_0000049511" description="Uncharacterized protein YdjC">
    <location>
        <begin position="1"/>
        <end position="116"/>
    </location>
</feature>
<gene>
    <name type="primary">ydjC</name>
    <name type="ordered locus">BSU06130</name>
</gene>
<reference key="1">
    <citation type="journal article" date="1997" name="DNA Res.">
        <title>Sequence analysis of the groESL-cotA region of the Bacillus subtilis genome, containing the restriction/modification system genes.</title>
        <authorList>
            <person name="Kasahara Y."/>
            <person name="Nakai S."/>
            <person name="Ogasawara N."/>
            <person name="Yata K."/>
            <person name="Sadaie Y."/>
        </authorList>
    </citation>
    <scope>NUCLEOTIDE SEQUENCE [GENOMIC DNA]</scope>
    <source>
        <strain>168 / Marburg / ATCC 6051 / DSM 10 / JCM 1465 / NBRC 13719 / NCIMB 3610 / NRRL NRS-744 / VKM B-501</strain>
    </source>
</reference>
<reference key="2">
    <citation type="journal article" date="1997" name="Nature">
        <title>The complete genome sequence of the Gram-positive bacterium Bacillus subtilis.</title>
        <authorList>
            <person name="Kunst F."/>
            <person name="Ogasawara N."/>
            <person name="Moszer I."/>
            <person name="Albertini A.M."/>
            <person name="Alloni G."/>
            <person name="Azevedo V."/>
            <person name="Bertero M.G."/>
            <person name="Bessieres P."/>
            <person name="Bolotin A."/>
            <person name="Borchert S."/>
            <person name="Borriss R."/>
            <person name="Boursier L."/>
            <person name="Brans A."/>
            <person name="Braun M."/>
            <person name="Brignell S.C."/>
            <person name="Bron S."/>
            <person name="Brouillet S."/>
            <person name="Bruschi C.V."/>
            <person name="Caldwell B."/>
            <person name="Capuano V."/>
            <person name="Carter N.M."/>
            <person name="Choi S.-K."/>
            <person name="Codani J.-J."/>
            <person name="Connerton I.F."/>
            <person name="Cummings N.J."/>
            <person name="Daniel R.A."/>
            <person name="Denizot F."/>
            <person name="Devine K.M."/>
            <person name="Duesterhoeft A."/>
            <person name="Ehrlich S.D."/>
            <person name="Emmerson P.T."/>
            <person name="Entian K.-D."/>
            <person name="Errington J."/>
            <person name="Fabret C."/>
            <person name="Ferrari E."/>
            <person name="Foulger D."/>
            <person name="Fritz C."/>
            <person name="Fujita M."/>
            <person name="Fujita Y."/>
            <person name="Fuma S."/>
            <person name="Galizzi A."/>
            <person name="Galleron N."/>
            <person name="Ghim S.-Y."/>
            <person name="Glaser P."/>
            <person name="Goffeau A."/>
            <person name="Golightly E.J."/>
            <person name="Grandi G."/>
            <person name="Guiseppi G."/>
            <person name="Guy B.J."/>
            <person name="Haga K."/>
            <person name="Haiech J."/>
            <person name="Harwood C.R."/>
            <person name="Henaut A."/>
            <person name="Hilbert H."/>
            <person name="Holsappel S."/>
            <person name="Hosono S."/>
            <person name="Hullo M.-F."/>
            <person name="Itaya M."/>
            <person name="Jones L.-M."/>
            <person name="Joris B."/>
            <person name="Karamata D."/>
            <person name="Kasahara Y."/>
            <person name="Klaerr-Blanchard M."/>
            <person name="Klein C."/>
            <person name="Kobayashi Y."/>
            <person name="Koetter P."/>
            <person name="Koningstein G."/>
            <person name="Krogh S."/>
            <person name="Kumano M."/>
            <person name="Kurita K."/>
            <person name="Lapidus A."/>
            <person name="Lardinois S."/>
            <person name="Lauber J."/>
            <person name="Lazarevic V."/>
            <person name="Lee S.-M."/>
            <person name="Levine A."/>
            <person name="Liu H."/>
            <person name="Masuda S."/>
            <person name="Mauel C."/>
            <person name="Medigue C."/>
            <person name="Medina N."/>
            <person name="Mellado R.P."/>
            <person name="Mizuno M."/>
            <person name="Moestl D."/>
            <person name="Nakai S."/>
            <person name="Noback M."/>
            <person name="Noone D."/>
            <person name="O'Reilly M."/>
            <person name="Ogawa K."/>
            <person name="Ogiwara A."/>
            <person name="Oudega B."/>
            <person name="Park S.-H."/>
            <person name="Parro V."/>
            <person name="Pohl T.M."/>
            <person name="Portetelle D."/>
            <person name="Porwollik S."/>
            <person name="Prescott A.M."/>
            <person name="Presecan E."/>
            <person name="Pujic P."/>
            <person name="Purnelle B."/>
            <person name="Rapoport G."/>
            <person name="Rey M."/>
            <person name="Reynolds S."/>
            <person name="Rieger M."/>
            <person name="Rivolta C."/>
            <person name="Rocha E."/>
            <person name="Roche B."/>
            <person name="Rose M."/>
            <person name="Sadaie Y."/>
            <person name="Sato T."/>
            <person name="Scanlan E."/>
            <person name="Schleich S."/>
            <person name="Schroeter R."/>
            <person name="Scoffone F."/>
            <person name="Sekiguchi J."/>
            <person name="Sekowska A."/>
            <person name="Seror S.J."/>
            <person name="Serror P."/>
            <person name="Shin B.-S."/>
            <person name="Soldo B."/>
            <person name="Sorokin A."/>
            <person name="Tacconi E."/>
            <person name="Takagi T."/>
            <person name="Takahashi H."/>
            <person name="Takemaru K."/>
            <person name="Takeuchi M."/>
            <person name="Tamakoshi A."/>
            <person name="Tanaka T."/>
            <person name="Terpstra P."/>
            <person name="Tognoni A."/>
            <person name="Tosato V."/>
            <person name="Uchiyama S."/>
            <person name="Vandenbol M."/>
            <person name="Vannier F."/>
            <person name="Vassarotti A."/>
            <person name="Viari A."/>
            <person name="Wambutt R."/>
            <person name="Wedler E."/>
            <person name="Wedler H."/>
            <person name="Weitzenegger T."/>
            <person name="Winters P."/>
            <person name="Wipat A."/>
            <person name="Yamamoto H."/>
            <person name="Yamane K."/>
            <person name="Yasumoto K."/>
            <person name="Yata K."/>
            <person name="Yoshida K."/>
            <person name="Yoshikawa H.-F."/>
            <person name="Zumstein E."/>
            <person name="Yoshikawa H."/>
            <person name="Danchin A."/>
        </authorList>
    </citation>
    <scope>NUCLEOTIDE SEQUENCE [LARGE SCALE GENOMIC DNA]</scope>
    <source>
        <strain>168</strain>
    </source>
</reference>
<reference key="3">
    <citation type="journal article" date="2002" name="J. Bacteriol.">
        <title>Molecular organization of intrinsic restriction and modification genes BsuM of Bacillus subtilis Marburg.</title>
        <authorList>
            <person name="Ohshima H."/>
            <person name="Matsuoka S."/>
            <person name="Asai K."/>
            <person name="Sadaie Y."/>
        </authorList>
    </citation>
    <scope>DISRUPTION PHENOTYPE</scope>
    <source>
        <strain>168 / Marburg / ATCC 6051 / DSM 10 / JCM 1465 / NBRC 13719 / NCIMB 3610 / NRRL NRS-744 / VKM B-501</strain>
    </source>
</reference>
<name>YDJC_BACSU</name>
<accession>O34715</accession>
<keyword id="KW-1185">Reference proteome</keyword>
<evidence type="ECO:0000269" key="1">
    <source>
    </source>
</evidence>
<organism>
    <name type="scientific">Bacillus subtilis (strain 168)</name>
    <dbReference type="NCBI Taxonomy" id="224308"/>
    <lineage>
        <taxon>Bacteria</taxon>
        <taxon>Bacillati</taxon>
        <taxon>Bacillota</taxon>
        <taxon>Bacilli</taxon>
        <taxon>Bacillales</taxon>
        <taxon>Bacillaceae</taxon>
        <taxon>Bacillus</taxon>
    </lineage>
</organism>
<protein>
    <recommendedName>
        <fullName>Uncharacterized protein YdjC</fullName>
    </recommendedName>
</protein>